<keyword id="KW-0067">ATP-binding</keyword>
<keyword id="KW-0143">Chaperone</keyword>
<keyword id="KW-0963">Cytoplasm</keyword>
<keyword id="KW-0413">Isomerase</keyword>
<keyword id="KW-0547">Nucleotide-binding</keyword>
<keyword id="KW-1185">Reference proteome</keyword>
<dbReference type="EC" id="5.6.1.7" evidence="1"/>
<dbReference type="EMBL" id="CP000449">
    <property type="protein sequence ID" value="ABI64897.1"/>
    <property type="molecule type" value="Genomic_DNA"/>
</dbReference>
<dbReference type="RefSeq" id="WP_011642544.1">
    <property type="nucleotide sequence ID" value="NC_008347.1"/>
</dbReference>
<dbReference type="SMR" id="Q0AS40"/>
<dbReference type="STRING" id="394221.Mmar10_0604"/>
<dbReference type="KEGG" id="mmr:Mmar10_0604"/>
<dbReference type="eggNOG" id="COG0459">
    <property type="taxonomic scope" value="Bacteria"/>
</dbReference>
<dbReference type="HOGENOM" id="CLU_016503_3_0_5"/>
<dbReference type="OrthoDB" id="9766614at2"/>
<dbReference type="Proteomes" id="UP000001964">
    <property type="component" value="Chromosome"/>
</dbReference>
<dbReference type="GO" id="GO:0005737">
    <property type="term" value="C:cytoplasm"/>
    <property type="evidence" value="ECO:0007669"/>
    <property type="project" value="UniProtKB-SubCell"/>
</dbReference>
<dbReference type="GO" id="GO:0005524">
    <property type="term" value="F:ATP binding"/>
    <property type="evidence" value="ECO:0007669"/>
    <property type="project" value="UniProtKB-UniRule"/>
</dbReference>
<dbReference type="GO" id="GO:0140662">
    <property type="term" value="F:ATP-dependent protein folding chaperone"/>
    <property type="evidence" value="ECO:0007669"/>
    <property type="project" value="InterPro"/>
</dbReference>
<dbReference type="GO" id="GO:0016853">
    <property type="term" value="F:isomerase activity"/>
    <property type="evidence" value="ECO:0007669"/>
    <property type="project" value="UniProtKB-KW"/>
</dbReference>
<dbReference type="GO" id="GO:0051082">
    <property type="term" value="F:unfolded protein binding"/>
    <property type="evidence" value="ECO:0007669"/>
    <property type="project" value="UniProtKB-UniRule"/>
</dbReference>
<dbReference type="GO" id="GO:0042026">
    <property type="term" value="P:protein refolding"/>
    <property type="evidence" value="ECO:0007669"/>
    <property type="project" value="UniProtKB-UniRule"/>
</dbReference>
<dbReference type="CDD" id="cd03344">
    <property type="entry name" value="GroEL"/>
    <property type="match status" value="1"/>
</dbReference>
<dbReference type="FunFam" id="1.10.560.10:FF:000001">
    <property type="entry name" value="60 kDa chaperonin"/>
    <property type="match status" value="1"/>
</dbReference>
<dbReference type="FunFam" id="3.50.7.10:FF:000001">
    <property type="entry name" value="60 kDa chaperonin"/>
    <property type="match status" value="1"/>
</dbReference>
<dbReference type="Gene3D" id="3.50.7.10">
    <property type="entry name" value="GroEL"/>
    <property type="match status" value="1"/>
</dbReference>
<dbReference type="Gene3D" id="1.10.560.10">
    <property type="entry name" value="GroEL-like equatorial domain"/>
    <property type="match status" value="1"/>
</dbReference>
<dbReference type="Gene3D" id="3.30.260.10">
    <property type="entry name" value="TCP-1-like chaperonin intermediate domain"/>
    <property type="match status" value="1"/>
</dbReference>
<dbReference type="HAMAP" id="MF_00600">
    <property type="entry name" value="CH60"/>
    <property type="match status" value="1"/>
</dbReference>
<dbReference type="InterPro" id="IPR018370">
    <property type="entry name" value="Chaperonin_Cpn60_CS"/>
</dbReference>
<dbReference type="InterPro" id="IPR001844">
    <property type="entry name" value="Cpn60/GroEL"/>
</dbReference>
<dbReference type="InterPro" id="IPR002423">
    <property type="entry name" value="Cpn60/GroEL/TCP-1"/>
</dbReference>
<dbReference type="InterPro" id="IPR027409">
    <property type="entry name" value="GroEL-like_apical_dom_sf"/>
</dbReference>
<dbReference type="InterPro" id="IPR027413">
    <property type="entry name" value="GROEL-like_equatorial_sf"/>
</dbReference>
<dbReference type="InterPro" id="IPR027410">
    <property type="entry name" value="TCP-1-like_intermed_sf"/>
</dbReference>
<dbReference type="NCBIfam" id="TIGR02348">
    <property type="entry name" value="GroEL"/>
    <property type="match status" value="1"/>
</dbReference>
<dbReference type="NCBIfam" id="NF000592">
    <property type="entry name" value="PRK00013.1"/>
    <property type="match status" value="1"/>
</dbReference>
<dbReference type="NCBIfam" id="NF009487">
    <property type="entry name" value="PRK12849.1"/>
    <property type="match status" value="1"/>
</dbReference>
<dbReference type="NCBIfam" id="NF009488">
    <property type="entry name" value="PRK12850.1"/>
    <property type="match status" value="1"/>
</dbReference>
<dbReference type="NCBIfam" id="NF009489">
    <property type="entry name" value="PRK12851.1"/>
    <property type="match status" value="1"/>
</dbReference>
<dbReference type="PANTHER" id="PTHR45633">
    <property type="entry name" value="60 KDA HEAT SHOCK PROTEIN, MITOCHONDRIAL"/>
    <property type="match status" value="1"/>
</dbReference>
<dbReference type="Pfam" id="PF00118">
    <property type="entry name" value="Cpn60_TCP1"/>
    <property type="match status" value="1"/>
</dbReference>
<dbReference type="PRINTS" id="PR00298">
    <property type="entry name" value="CHAPERONIN60"/>
</dbReference>
<dbReference type="SUPFAM" id="SSF52029">
    <property type="entry name" value="GroEL apical domain-like"/>
    <property type="match status" value="1"/>
</dbReference>
<dbReference type="SUPFAM" id="SSF48592">
    <property type="entry name" value="GroEL equatorial domain-like"/>
    <property type="match status" value="1"/>
</dbReference>
<dbReference type="SUPFAM" id="SSF54849">
    <property type="entry name" value="GroEL-intermediate domain like"/>
    <property type="match status" value="1"/>
</dbReference>
<dbReference type="PROSITE" id="PS00296">
    <property type="entry name" value="CHAPERONINS_CPN60"/>
    <property type="match status" value="1"/>
</dbReference>
<name>CH60_MARMM</name>
<protein>
    <recommendedName>
        <fullName evidence="1">Chaperonin GroEL</fullName>
        <ecNumber evidence="1">5.6.1.7</ecNumber>
    </recommendedName>
    <alternativeName>
        <fullName evidence="1">60 kDa chaperonin</fullName>
    </alternativeName>
    <alternativeName>
        <fullName evidence="1">Chaperonin-60</fullName>
        <shortName evidence="1">Cpn60</shortName>
    </alternativeName>
</protein>
<reference key="1">
    <citation type="submission" date="2006-08" db="EMBL/GenBank/DDBJ databases">
        <title>Complete sequence of Maricaulis maris MCS10.</title>
        <authorList>
            <consortium name="US DOE Joint Genome Institute"/>
            <person name="Copeland A."/>
            <person name="Lucas S."/>
            <person name="Lapidus A."/>
            <person name="Barry K."/>
            <person name="Detter J.C."/>
            <person name="Glavina del Rio T."/>
            <person name="Hammon N."/>
            <person name="Israni S."/>
            <person name="Dalin E."/>
            <person name="Tice H."/>
            <person name="Pitluck S."/>
            <person name="Saunders E."/>
            <person name="Brettin T."/>
            <person name="Bruce D."/>
            <person name="Han C."/>
            <person name="Tapia R."/>
            <person name="Gilna P."/>
            <person name="Schmutz J."/>
            <person name="Larimer F."/>
            <person name="Land M."/>
            <person name="Hauser L."/>
            <person name="Kyrpides N."/>
            <person name="Mikhailova N."/>
            <person name="Viollier P."/>
            <person name="Stephens C."/>
            <person name="Richardson P."/>
        </authorList>
    </citation>
    <scope>NUCLEOTIDE SEQUENCE [LARGE SCALE GENOMIC DNA]</scope>
    <source>
        <strain>MCS10</strain>
    </source>
</reference>
<feature type="chain" id="PRO_1000025807" description="Chaperonin GroEL">
    <location>
        <begin position="1"/>
        <end position="551"/>
    </location>
</feature>
<feature type="binding site" evidence="1">
    <location>
        <begin position="30"/>
        <end position="33"/>
    </location>
    <ligand>
        <name>ATP</name>
        <dbReference type="ChEBI" id="CHEBI:30616"/>
    </ligand>
</feature>
<feature type="binding site" evidence="1">
    <location>
        <position position="51"/>
    </location>
    <ligand>
        <name>ATP</name>
        <dbReference type="ChEBI" id="CHEBI:30616"/>
    </ligand>
</feature>
<feature type="binding site" evidence="1">
    <location>
        <begin position="87"/>
        <end position="91"/>
    </location>
    <ligand>
        <name>ATP</name>
        <dbReference type="ChEBI" id="CHEBI:30616"/>
    </ligand>
</feature>
<feature type="binding site" evidence="1">
    <location>
        <position position="415"/>
    </location>
    <ligand>
        <name>ATP</name>
        <dbReference type="ChEBI" id="CHEBI:30616"/>
    </ligand>
</feature>
<feature type="binding site" evidence="1">
    <location>
        <position position="496"/>
    </location>
    <ligand>
        <name>ATP</name>
        <dbReference type="ChEBI" id="CHEBI:30616"/>
    </ligand>
</feature>
<evidence type="ECO:0000255" key="1">
    <source>
        <dbReference type="HAMAP-Rule" id="MF_00600"/>
    </source>
</evidence>
<proteinExistence type="inferred from homology"/>
<sequence>MAAKDVLFGSDARERMLRGVDILANAVKVTLGPKGRNVVIEKSFGAPRTTKDGVSVAKEIELADKFENMGAQMLREVASKTNDVAGDGTTTATVLAQSIVREGMKSVAAGMNPMDLKRGIDKAVAIVMDDIKASSTPVKDSSEVAQVGTISANGASDIGEMIAKAMDKVGKEGVITVEEAKSLETELDVVEGMQFDRGYLSPYFITDADKMQVEMEEPYILLFEKKLTSLQPMLPILEAVVQSSRPLLIIAEDVEGEALATLVVNKLRGGLKIAAVKAPGFGDRRKAMLEDLAILTGGQVISEDLGIKLETVTLDMLGSAKRVNITKDDTTIVDGVGDKAQIEARVTQIRRQSEETTSDYDREKLQERLAKLAGGVAVIKVGGATEIEVKEKKDRVDDALNATRAAVEEGIVPGGGVALLKASAKLAGLEGDNADQTQGIAIVARALQSPIRQIATNSGVEGSIVVGKVMENPSATFGFNAQTEEYGDMLAFGVIDPAKVVRTALQDAASVASLLITTEAAVADAPKEEGAGGGMPDMGGMGGMGGMGGMM</sequence>
<gene>
    <name evidence="1" type="primary">groEL</name>
    <name evidence="1" type="synonym">groL</name>
    <name type="ordered locus">Mmar10_0604</name>
</gene>
<accession>Q0AS40</accession>
<comment type="function">
    <text evidence="1">Together with its co-chaperonin GroES, plays an essential role in assisting protein folding. The GroEL-GroES system forms a nano-cage that allows encapsulation of the non-native substrate proteins and provides a physical environment optimized to promote and accelerate protein folding.</text>
</comment>
<comment type="catalytic activity">
    <reaction evidence="1">
        <text>ATP + H2O + a folded polypeptide = ADP + phosphate + an unfolded polypeptide.</text>
        <dbReference type="EC" id="5.6.1.7"/>
    </reaction>
</comment>
<comment type="subunit">
    <text evidence="1">Forms a cylinder of 14 subunits composed of two heptameric rings stacked back-to-back. Interacts with the co-chaperonin GroES.</text>
</comment>
<comment type="subcellular location">
    <subcellularLocation>
        <location evidence="1">Cytoplasm</location>
    </subcellularLocation>
</comment>
<comment type="similarity">
    <text evidence="1">Belongs to the chaperonin (HSP60) family.</text>
</comment>
<organism>
    <name type="scientific">Maricaulis maris (strain MCS10)</name>
    <name type="common">Caulobacter maris</name>
    <dbReference type="NCBI Taxonomy" id="394221"/>
    <lineage>
        <taxon>Bacteria</taxon>
        <taxon>Pseudomonadati</taxon>
        <taxon>Pseudomonadota</taxon>
        <taxon>Alphaproteobacteria</taxon>
        <taxon>Maricaulales</taxon>
        <taxon>Maricaulaceae</taxon>
        <taxon>Maricaulis</taxon>
    </lineage>
</organism>